<keyword id="KW-0997">Cell inner membrane</keyword>
<keyword id="KW-1003">Cell membrane</keyword>
<keyword id="KW-0133">Cell shape</keyword>
<keyword id="KW-0961">Cell wall biogenesis/degradation</keyword>
<keyword id="KW-0328">Glycosyltransferase</keyword>
<keyword id="KW-0472">Membrane</keyword>
<keyword id="KW-0573">Peptidoglycan synthesis</keyword>
<keyword id="KW-0808">Transferase</keyword>
<keyword id="KW-0812">Transmembrane</keyword>
<keyword id="KW-1133">Transmembrane helix</keyword>
<dbReference type="EC" id="2.4.99.28" evidence="1"/>
<dbReference type="EMBL" id="CP000378">
    <property type="protein sequence ID" value="ABF75045.1"/>
    <property type="molecule type" value="Genomic_DNA"/>
</dbReference>
<dbReference type="SMR" id="Q1BZB0"/>
<dbReference type="CAZy" id="GT51">
    <property type="family name" value="Glycosyltransferase Family 51"/>
</dbReference>
<dbReference type="HOGENOM" id="CLU_006354_1_0_4"/>
<dbReference type="UniPathway" id="UPA00219"/>
<dbReference type="GO" id="GO:0009274">
    <property type="term" value="C:peptidoglycan-based cell wall"/>
    <property type="evidence" value="ECO:0007669"/>
    <property type="project" value="InterPro"/>
</dbReference>
<dbReference type="GO" id="GO:0005886">
    <property type="term" value="C:plasma membrane"/>
    <property type="evidence" value="ECO:0007669"/>
    <property type="project" value="UniProtKB-SubCell"/>
</dbReference>
<dbReference type="GO" id="GO:0016763">
    <property type="term" value="F:pentosyltransferase activity"/>
    <property type="evidence" value="ECO:0007669"/>
    <property type="project" value="InterPro"/>
</dbReference>
<dbReference type="GO" id="GO:0008955">
    <property type="term" value="F:peptidoglycan glycosyltransferase activity"/>
    <property type="evidence" value="ECO:0007669"/>
    <property type="project" value="UniProtKB-UniRule"/>
</dbReference>
<dbReference type="GO" id="GO:0071555">
    <property type="term" value="P:cell wall organization"/>
    <property type="evidence" value="ECO:0007669"/>
    <property type="project" value="UniProtKB-KW"/>
</dbReference>
<dbReference type="GO" id="GO:0009252">
    <property type="term" value="P:peptidoglycan biosynthetic process"/>
    <property type="evidence" value="ECO:0007669"/>
    <property type="project" value="UniProtKB-UniRule"/>
</dbReference>
<dbReference type="GO" id="GO:0008360">
    <property type="term" value="P:regulation of cell shape"/>
    <property type="evidence" value="ECO:0007669"/>
    <property type="project" value="UniProtKB-KW"/>
</dbReference>
<dbReference type="Gene3D" id="1.10.3810.10">
    <property type="entry name" value="Biosynthetic peptidoglycan transglycosylase-like"/>
    <property type="match status" value="1"/>
</dbReference>
<dbReference type="HAMAP" id="MF_00766">
    <property type="entry name" value="PGT_MtgA"/>
    <property type="match status" value="1"/>
</dbReference>
<dbReference type="InterPro" id="IPR001264">
    <property type="entry name" value="Glyco_trans_51"/>
</dbReference>
<dbReference type="InterPro" id="IPR023346">
    <property type="entry name" value="Lysozyme-like_dom_sf"/>
</dbReference>
<dbReference type="InterPro" id="IPR036950">
    <property type="entry name" value="PBP_transglycosylase"/>
</dbReference>
<dbReference type="InterPro" id="IPR011812">
    <property type="entry name" value="Pep_trsgly"/>
</dbReference>
<dbReference type="NCBIfam" id="TIGR02070">
    <property type="entry name" value="mono_pep_trsgly"/>
    <property type="match status" value="1"/>
</dbReference>
<dbReference type="PANTHER" id="PTHR30400:SF0">
    <property type="entry name" value="BIOSYNTHETIC PEPTIDOGLYCAN TRANSGLYCOSYLASE"/>
    <property type="match status" value="1"/>
</dbReference>
<dbReference type="PANTHER" id="PTHR30400">
    <property type="entry name" value="MONOFUNCTIONAL BIOSYNTHETIC PEPTIDOGLYCAN TRANSGLYCOSYLASE"/>
    <property type="match status" value="1"/>
</dbReference>
<dbReference type="Pfam" id="PF00912">
    <property type="entry name" value="Transgly"/>
    <property type="match status" value="1"/>
</dbReference>
<dbReference type="SUPFAM" id="SSF53955">
    <property type="entry name" value="Lysozyme-like"/>
    <property type="match status" value="1"/>
</dbReference>
<sequence>MVAVSGTQRTRTVSLARWAVYAGSVFAGAWLATQLFYLAQIALWLFVNPGSTAFMRTDAWWLSRDTPPAQIRHQWVPYDQISRNLKRALIASEDSTFATNNGYDVDAILQAWEKNKARGRIVAGGSTITQQLARNLFLSREKSYIRKGQELIITWMLETVLDKERIFEIYLNSVEWGRGVYGAEAAARYYYKIPASRLGAWQSARLAVMLPKPRWFDAHRGSAYQAQRAAVIARRMGAAELPQSE</sequence>
<gene>
    <name evidence="1" type="primary">mtgA</name>
    <name type="ordered locus">Bcen_0131</name>
</gene>
<evidence type="ECO:0000255" key="1">
    <source>
        <dbReference type="HAMAP-Rule" id="MF_00766"/>
    </source>
</evidence>
<feature type="chain" id="PRO_0000257659" description="Biosynthetic peptidoglycan transglycosylase">
    <location>
        <begin position="1"/>
        <end position="245"/>
    </location>
</feature>
<feature type="transmembrane region" description="Helical" evidence="1">
    <location>
        <begin position="20"/>
        <end position="42"/>
    </location>
</feature>
<organism>
    <name type="scientific">Burkholderia orbicola (strain AU 1054)</name>
    <dbReference type="NCBI Taxonomy" id="331271"/>
    <lineage>
        <taxon>Bacteria</taxon>
        <taxon>Pseudomonadati</taxon>
        <taxon>Pseudomonadota</taxon>
        <taxon>Betaproteobacteria</taxon>
        <taxon>Burkholderiales</taxon>
        <taxon>Burkholderiaceae</taxon>
        <taxon>Burkholderia</taxon>
        <taxon>Burkholderia cepacia complex</taxon>
        <taxon>Burkholderia orbicola</taxon>
    </lineage>
</organism>
<comment type="function">
    <text evidence="1">Peptidoglycan polymerase that catalyzes glycan chain elongation from lipid-linked precursors.</text>
</comment>
<comment type="catalytic activity">
    <reaction evidence="1">
        <text>[GlcNAc-(1-&gt;4)-Mur2Ac(oyl-L-Ala-gamma-D-Glu-L-Lys-D-Ala-D-Ala)](n)-di-trans,octa-cis-undecaprenyl diphosphate + beta-D-GlcNAc-(1-&gt;4)-Mur2Ac(oyl-L-Ala-gamma-D-Glu-L-Lys-D-Ala-D-Ala)-di-trans,octa-cis-undecaprenyl diphosphate = [GlcNAc-(1-&gt;4)-Mur2Ac(oyl-L-Ala-gamma-D-Glu-L-Lys-D-Ala-D-Ala)](n+1)-di-trans,octa-cis-undecaprenyl diphosphate + di-trans,octa-cis-undecaprenyl diphosphate + H(+)</text>
        <dbReference type="Rhea" id="RHEA:23708"/>
        <dbReference type="Rhea" id="RHEA-COMP:9602"/>
        <dbReference type="Rhea" id="RHEA-COMP:9603"/>
        <dbReference type="ChEBI" id="CHEBI:15378"/>
        <dbReference type="ChEBI" id="CHEBI:58405"/>
        <dbReference type="ChEBI" id="CHEBI:60033"/>
        <dbReference type="ChEBI" id="CHEBI:78435"/>
        <dbReference type="EC" id="2.4.99.28"/>
    </reaction>
</comment>
<comment type="pathway">
    <text evidence="1">Cell wall biogenesis; peptidoglycan biosynthesis.</text>
</comment>
<comment type="subcellular location">
    <subcellularLocation>
        <location evidence="1">Cell inner membrane</location>
        <topology evidence="1">Single-pass membrane protein</topology>
    </subcellularLocation>
</comment>
<comment type="similarity">
    <text evidence="1">Belongs to the glycosyltransferase 51 family.</text>
</comment>
<name>MTGA_BURO1</name>
<proteinExistence type="inferred from homology"/>
<reference key="1">
    <citation type="submission" date="2006-05" db="EMBL/GenBank/DDBJ databases">
        <title>Complete sequence of chromosome 1 of Burkholderia cenocepacia AU 1054.</title>
        <authorList>
            <consortium name="US DOE Joint Genome Institute"/>
            <person name="Copeland A."/>
            <person name="Lucas S."/>
            <person name="Lapidus A."/>
            <person name="Barry K."/>
            <person name="Detter J.C."/>
            <person name="Glavina del Rio T."/>
            <person name="Hammon N."/>
            <person name="Israni S."/>
            <person name="Dalin E."/>
            <person name="Tice H."/>
            <person name="Pitluck S."/>
            <person name="Chain P."/>
            <person name="Malfatti S."/>
            <person name="Shin M."/>
            <person name="Vergez L."/>
            <person name="Schmutz J."/>
            <person name="Larimer F."/>
            <person name="Land M."/>
            <person name="Hauser L."/>
            <person name="Kyrpides N."/>
            <person name="Lykidis A."/>
            <person name="LiPuma J.J."/>
            <person name="Konstantinidis K."/>
            <person name="Tiedje J.M."/>
            <person name="Richardson P."/>
        </authorList>
    </citation>
    <scope>NUCLEOTIDE SEQUENCE [LARGE SCALE GENOMIC DNA]</scope>
    <source>
        <strain>AU 1054</strain>
    </source>
</reference>
<accession>Q1BZB0</accession>
<protein>
    <recommendedName>
        <fullName evidence="1">Biosynthetic peptidoglycan transglycosylase</fullName>
        <ecNumber evidence="1">2.4.99.28</ecNumber>
    </recommendedName>
    <alternativeName>
        <fullName evidence="1">Glycan polymerase</fullName>
    </alternativeName>
    <alternativeName>
        <fullName evidence="1">Peptidoglycan glycosyltransferase MtgA</fullName>
        <shortName evidence="1">PGT</shortName>
    </alternativeName>
</protein>